<evidence type="ECO:0000250" key="1">
    <source>
        <dbReference type="UniProtKB" id="P02639"/>
    </source>
</evidence>
<evidence type="ECO:0000250" key="2">
    <source>
        <dbReference type="UniProtKB" id="P23297"/>
    </source>
</evidence>
<evidence type="ECO:0000250" key="3">
    <source>
        <dbReference type="UniProtKB" id="P56565"/>
    </source>
</evidence>
<evidence type="ECO:0000255" key="4">
    <source>
        <dbReference type="PROSITE-ProRule" id="PRU00448"/>
    </source>
</evidence>
<evidence type="ECO:0000269" key="5">
    <source>
    </source>
</evidence>
<evidence type="ECO:0000269" key="6">
    <source>
    </source>
</evidence>
<evidence type="ECO:0000269" key="7">
    <source>
    </source>
</evidence>
<evidence type="ECO:0000269" key="8">
    <source>
    </source>
</evidence>
<evidence type="ECO:0000269" key="9">
    <source>
    </source>
</evidence>
<evidence type="ECO:0000305" key="10"/>
<evidence type="ECO:0007829" key="11">
    <source>
        <dbReference type="PDB" id="1K2H"/>
    </source>
</evidence>
<evidence type="ECO:0007829" key="12">
    <source>
        <dbReference type="PDB" id="1ZFS"/>
    </source>
</evidence>
<evidence type="ECO:0007829" key="13">
    <source>
        <dbReference type="PDB" id="2K2F"/>
    </source>
</evidence>
<evidence type="ECO:0007829" key="14">
    <source>
        <dbReference type="PDB" id="2KBM"/>
    </source>
</evidence>
<name>S10A1_RAT</name>
<dbReference type="EMBL" id="U26358">
    <property type="protein sequence ID" value="AAB53657.1"/>
    <property type="molecule type" value="Genomic_DNA"/>
</dbReference>
<dbReference type="EMBL" id="U26357">
    <property type="protein sequence ID" value="AAB53657.1"/>
    <property type="status" value="JOINED"/>
    <property type="molecule type" value="Genomic_DNA"/>
</dbReference>
<dbReference type="EMBL" id="S68809">
    <property type="protein sequence ID" value="AAB20539.2"/>
    <property type="molecule type" value="mRNA"/>
</dbReference>
<dbReference type="RefSeq" id="NP_001007637.1">
    <property type="nucleotide sequence ID" value="NM_001007636.3"/>
</dbReference>
<dbReference type="PDB" id="1K2H">
    <property type="method" value="NMR"/>
    <property type="chains" value="A/B=2-94"/>
</dbReference>
<dbReference type="PDB" id="1ZFS">
    <property type="method" value="NMR"/>
    <property type="chains" value="A/B=2-94"/>
</dbReference>
<dbReference type="PDB" id="2K2F">
    <property type="method" value="NMR"/>
    <property type="chains" value="A/B=2-94"/>
</dbReference>
<dbReference type="PDB" id="2KBM">
    <property type="method" value="NMR"/>
    <property type="chains" value="A/B=2-94"/>
</dbReference>
<dbReference type="PDBsum" id="1K2H"/>
<dbReference type="PDBsum" id="1ZFS"/>
<dbReference type="PDBsum" id="2K2F"/>
<dbReference type="PDBsum" id="2KBM"/>
<dbReference type="BMRB" id="P35467"/>
<dbReference type="SMR" id="P35467"/>
<dbReference type="BioGRID" id="254914">
    <property type="interactions" value="2"/>
</dbReference>
<dbReference type="FunCoup" id="P35467">
    <property type="interactions" value="29"/>
</dbReference>
<dbReference type="IntAct" id="P35467">
    <property type="interactions" value="4"/>
</dbReference>
<dbReference type="MINT" id="P35467"/>
<dbReference type="STRING" id="10116.ENSRNOP00000017000"/>
<dbReference type="PhosphoSitePlus" id="P35467"/>
<dbReference type="jPOST" id="P35467"/>
<dbReference type="PaxDb" id="10116-ENSRNOP00000017000"/>
<dbReference type="GeneID" id="295214"/>
<dbReference type="KEGG" id="rno:295214"/>
<dbReference type="UCSC" id="RGD:3614">
    <property type="organism name" value="rat"/>
</dbReference>
<dbReference type="AGR" id="RGD:3614"/>
<dbReference type="CTD" id="6271"/>
<dbReference type="RGD" id="3614">
    <property type="gene designation" value="S100a1"/>
</dbReference>
<dbReference type="VEuPathDB" id="HostDB:ENSRNOG00000012410"/>
<dbReference type="eggNOG" id="ENOG502SSF0">
    <property type="taxonomic scope" value="Eukaryota"/>
</dbReference>
<dbReference type="HOGENOM" id="CLU_138624_2_0_1"/>
<dbReference type="InParanoid" id="P35467"/>
<dbReference type="OrthoDB" id="70342at9989"/>
<dbReference type="PhylomeDB" id="P35467"/>
<dbReference type="TreeFam" id="TF332727"/>
<dbReference type="Reactome" id="R-RNO-5686938">
    <property type="pathway name" value="Regulation of TLR by endogenous ligand"/>
</dbReference>
<dbReference type="EvolutionaryTrace" id="P35467"/>
<dbReference type="PRO" id="PR:P35467"/>
<dbReference type="Proteomes" id="UP000002494">
    <property type="component" value="Chromosome 2"/>
</dbReference>
<dbReference type="Bgee" id="ENSRNOG00000012410">
    <property type="expression patterns" value="Expressed in heart and 20 other cell types or tissues"/>
</dbReference>
<dbReference type="GO" id="GO:0031672">
    <property type="term" value="C:A band"/>
    <property type="evidence" value="ECO:0000314"/>
    <property type="project" value="RGD"/>
</dbReference>
<dbReference type="GO" id="GO:0005737">
    <property type="term" value="C:cytoplasm"/>
    <property type="evidence" value="ECO:0000318"/>
    <property type="project" value="GO_Central"/>
</dbReference>
<dbReference type="GO" id="GO:0005829">
    <property type="term" value="C:cytosol"/>
    <property type="evidence" value="ECO:0007669"/>
    <property type="project" value="Ensembl"/>
</dbReference>
<dbReference type="GO" id="GO:0005794">
    <property type="term" value="C:Golgi apparatus"/>
    <property type="evidence" value="ECO:0007669"/>
    <property type="project" value="Ensembl"/>
</dbReference>
<dbReference type="GO" id="GO:0031674">
    <property type="term" value="C:I band"/>
    <property type="evidence" value="ECO:0000314"/>
    <property type="project" value="RGD"/>
</dbReference>
<dbReference type="GO" id="GO:0031430">
    <property type="term" value="C:M band"/>
    <property type="evidence" value="ECO:0000314"/>
    <property type="project" value="RGD"/>
</dbReference>
<dbReference type="GO" id="GO:0005739">
    <property type="term" value="C:mitochondrion"/>
    <property type="evidence" value="ECO:0007669"/>
    <property type="project" value="UniProtKB-SubCell"/>
</dbReference>
<dbReference type="GO" id="GO:0005654">
    <property type="term" value="C:nucleoplasm"/>
    <property type="evidence" value="ECO:0007669"/>
    <property type="project" value="Ensembl"/>
</dbReference>
<dbReference type="GO" id="GO:0005634">
    <property type="term" value="C:nucleus"/>
    <property type="evidence" value="ECO:0000266"/>
    <property type="project" value="RGD"/>
</dbReference>
<dbReference type="GO" id="GO:0016529">
    <property type="term" value="C:sarcoplasmic reticulum"/>
    <property type="evidence" value="ECO:0000266"/>
    <property type="project" value="RGD"/>
</dbReference>
<dbReference type="GO" id="GO:0030018">
    <property type="term" value="C:Z disc"/>
    <property type="evidence" value="ECO:0000314"/>
    <property type="project" value="RGD"/>
</dbReference>
<dbReference type="GO" id="GO:0051117">
    <property type="term" value="F:ATPase binding"/>
    <property type="evidence" value="ECO:0000266"/>
    <property type="project" value="RGD"/>
</dbReference>
<dbReference type="GO" id="GO:0005509">
    <property type="term" value="F:calcium ion binding"/>
    <property type="evidence" value="ECO:0000314"/>
    <property type="project" value="RGD"/>
</dbReference>
<dbReference type="GO" id="GO:0048306">
    <property type="term" value="F:calcium-dependent protein binding"/>
    <property type="evidence" value="ECO:0000353"/>
    <property type="project" value="RGD"/>
</dbReference>
<dbReference type="GO" id="GO:0042802">
    <property type="term" value="F:identical protein binding"/>
    <property type="evidence" value="ECO:0000353"/>
    <property type="project" value="RGD"/>
</dbReference>
<dbReference type="GO" id="GO:0042803">
    <property type="term" value="F:protein homodimerization activity"/>
    <property type="evidence" value="ECO:0000266"/>
    <property type="project" value="RGD"/>
</dbReference>
<dbReference type="GO" id="GO:0044548">
    <property type="term" value="F:S100 protein binding"/>
    <property type="evidence" value="ECO:0000266"/>
    <property type="project" value="RGD"/>
</dbReference>
<dbReference type="GO" id="GO:0000122">
    <property type="term" value="P:negative regulation of transcription by RNA polymerase II"/>
    <property type="evidence" value="ECO:0000315"/>
    <property type="project" value="RGD"/>
</dbReference>
<dbReference type="GO" id="GO:1903672">
    <property type="term" value="P:positive regulation of sprouting angiogenesis"/>
    <property type="evidence" value="ECO:0000266"/>
    <property type="project" value="RGD"/>
</dbReference>
<dbReference type="GO" id="GO:0008016">
    <property type="term" value="P:regulation of heart contraction"/>
    <property type="evidence" value="ECO:0007669"/>
    <property type="project" value="InterPro"/>
</dbReference>
<dbReference type="CDD" id="cd05025">
    <property type="entry name" value="S-100A1"/>
    <property type="match status" value="1"/>
</dbReference>
<dbReference type="FunFam" id="1.10.238.10:FF:000044">
    <property type="entry name" value="Protein S100"/>
    <property type="match status" value="1"/>
</dbReference>
<dbReference type="Gene3D" id="1.10.238.10">
    <property type="entry name" value="EF-hand"/>
    <property type="match status" value="1"/>
</dbReference>
<dbReference type="InterPro" id="IPR011992">
    <property type="entry name" value="EF-hand-dom_pair"/>
</dbReference>
<dbReference type="InterPro" id="IPR018247">
    <property type="entry name" value="EF_Hand_1_Ca_BS"/>
</dbReference>
<dbReference type="InterPro" id="IPR002048">
    <property type="entry name" value="EF_hand_dom"/>
</dbReference>
<dbReference type="InterPro" id="IPR028486">
    <property type="entry name" value="S100-A1"/>
</dbReference>
<dbReference type="InterPro" id="IPR001751">
    <property type="entry name" value="S100/CaBP7/8-like_CS"/>
</dbReference>
<dbReference type="InterPro" id="IPR013787">
    <property type="entry name" value="S100_Ca-bd_sub"/>
</dbReference>
<dbReference type="PANTHER" id="PTHR11639:SF134">
    <property type="entry name" value="PROTEIN S100-A1-RELATED"/>
    <property type="match status" value="1"/>
</dbReference>
<dbReference type="PANTHER" id="PTHR11639">
    <property type="entry name" value="S100 CALCIUM-BINDING PROTEIN"/>
    <property type="match status" value="1"/>
</dbReference>
<dbReference type="Pfam" id="PF00036">
    <property type="entry name" value="EF-hand_1"/>
    <property type="match status" value="1"/>
</dbReference>
<dbReference type="Pfam" id="PF01023">
    <property type="entry name" value="S_100"/>
    <property type="match status" value="1"/>
</dbReference>
<dbReference type="SMART" id="SM00054">
    <property type="entry name" value="EFh"/>
    <property type="match status" value="1"/>
</dbReference>
<dbReference type="SMART" id="SM01394">
    <property type="entry name" value="S_100"/>
    <property type="match status" value="1"/>
</dbReference>
<dbReference type="SUPFAM" id="SSF47473">
    <property type="entry name" value="EF-hand"/>
    <property type="match status" value="1"/>
</dbReference>
<dbReference type="PROSITE" id="PS00018">
    <property type="entry name" value="EF_HAND_1"/>
    <property type="match status" value="1"/>
</dbReference>
<dbReference type="PROSITE" id="PS50222">
    <property type="entry name" value="EF_HAND_2"/>
    <property type="match status" value="1"/>
</dbReference>
<dbReference type="PROSITE" id="PS00303">
    <property type="entry name" value="S100_CABP"/>
    <property type="match status" value="1"/>
</dbReference>
<feature type="chain" id="PRO_0000143963" description="Protein S100-A1">
    <location>
        <begin position="1"/>
        <end position="94"/>
    </location>
</feature>
<feature type="domain" description="EF-hand 1" evidence="10">
    <location>
        <begin position="13"/>
        <end position="48"/>
    </location>
</feature>
<feature type="domain" description="EF-hand 2" evidence="4">
    <location>
        <begin position="50"/>
        <end position="85"/>
    </location>
</feature>
<feature type="binding site" evidence="5 7 8">
    <location>
        <position position="28"/>
    </location>
    <ligand>
        <name>Ca(2+)</name>
        <dbReference type="ChEBI" id="CHEBI:29108"/>
        <label>1</label>
        <note>low affinity</note>
    </ligand>
</feature>
<feature type="binding site" evidence="5 7 8">
    <location>
        <position position="33"/>
    </location>
    <ligand>
        <name>Ca(2+)</name>
        <dbReference type="ChEBI" id="CHEBI:29108"/>
        <label>1</label>
        <note>low affinity</note>
    </ligand>
</feature>
<feature type="binding site" evidence="4 5 7 8">
    <location>
        <position position="63"/>
    </location>
    <ligand>
        <name>Ca(2+)</name>
        <dbReference type="ChEBI" id="CHEBI:29108"/>
        <label>2</label>
        <note>high affinity</note>
    </ligand>
</feature>
<feature type="binding site" evidence="4 5 7 8">
    <location>
        <position position="65"/>
    </location>
    <ligand>
        <name>Ca(2+)</name>
        <dbReference type="ChEBI" id="CHEBI:29108"/>
        <label>2</label>
        <note>high affinity</note>
    </ligand>
</feature>
<feature type="binding site" evidence="4 5 7 8">
    <location>
        <position position="67"/>
    </location>
    <ligand>
        <name>Ca(2+)</name>
        <dbReference type="ChEBI" id="CHEBI:29108"/>
        <label>2</label>
        <note>high affinity</note>
    </ligand>
</feature>
<feature type="binding site" evidence="4 5 7 8">
    <location>
        <position position="69"/>
    </location>
    <ligand>
        <name>Ca(2+)</name>
        <dbReference type="ChEBI" id="CHEBI:29108"/>
        <label>2</label>
        <note>high affinity</note>
    </ligand>
</feature>
<feature type="binding site" evidence="4 5 7 8">
    <location>
        <position position="74"/>
    </location>
    <ligand>
        <name>Ca(2+)</name>
        <dbReference type="ChEBI" id="CHEBI:29108"/>
        <label>2</label>
        <note>high affinity</note>
    </ligand>
</feature>
<feature type="modified residue" description="S-nitrosocysteine" evidence="2">
    <location>
        <position position="86"/>
    </location>
</feature>
<feature type="sequence conflict" description="In Ref. 2; AAB20539." evidence="10" ref="2">
    <original>N</original>
    <variation>H</variation>
    <location>
        <position position="14"/>
    </location>
</feature>
<feature type="sequence conflict" description="In Ref. 2; AAB20539." evidence="10" ref="2">
    <original>K</original>
    <variation>R</variation>
    <location>
        <position position="57"/>
    </location>
</feature>
<feature type="helix" evidence="11">
    <location>
        <begin position="4"/>
        <end position="20"/>
    </location>
</feature>
<feature type="strand" evidence="13">
    <location>
        <begin position="22"/>
        <end position="25"/>
    </location>
</feature>
<feature type="strand" evidence="12">
    <location>
        <begin position="27"/>
        <end position="30"/>
    </location>
</feature>
<feature type="helix" evidence="11">
    <location>
        <begin position="31"/>
        <end position="41"/>
    </location>
</feature>
<feature type="helix" evidence="11">
    <location>
        <begin position="43"/>
        <end position="47"/>
    </location>
</feature>
<feature type="helix" evidence="14">
    <location>
        <begin position="49"/>
        <end position="51"/>
    </location>
</feature>
<feature type="helix" evidence="11">
    <location>
        <begin position="52"/>
        <end position="64"/>
    </location>
</feature>
<feature type="strand" evidence="12">
    <location>
        <begin position="68"/>
        <end position="70"/>
    </location>
</feature>
<feature type="helix" evidence="11">
    <location>
        <begin position="72"/>
        <end position="85"/>
    </location>
</feature>
<feature type="helix" evidence="13">
    <location>
        <begin position="91"/>
        <end position="93"/>
    </location>
</feature>
<gene>
    <name type="primary">S100a1</name>
</gene>
<sequence length="94" mass="10560">MGSELETAMETLINVFHAHSGKEGDKYKLSKKELKDLLQTELSSFLDVQKDADAVDKIMKELDENGDGEVDFQEFVVLVAALTVACNNFFWENS</sequence>
<proteinExistence type="evidence at protein level"/>
<keyword id="KW-0002">3D-structure</keyword>
<keyword id="KW-0106">Calcium</keyword>
<keyword id="KW-0963">Cytoplasm</keyword>
<keyword id="KW-0479">Metal-binding</keyword>
<keyword id="KW-0496">Mitochondrion</keyword>
<keyword id="KW-1185">Reference proteome</keyword>
<keyword id="KW-0677">Repeat</keyword>
<keyword id="KW-0702">S-nitrosylation</keyword>
<keyword id="KW-0703">Sarcoplasmic reticulum</keyword>
<comment type="function">
    <text evidence="2 7">Small calcium binding protein that plays important roles in several biological processes such as Ca(2+) homeostasis, chondrocyte biology and cardiomyocyte regulation. In response to an increase in intracellular Ca(2+) levels, binds calcium which triggers conformational changes. These changes allow interactions with specific target proteins and modulate their activity. Regulates a network in cardiomyocytes controlling sarcoplasmic reticulum Ca(2+) cycling and mitochondrial function through interaction with the ryanodine receptors RYR1 and RYR2, sarcoplasmic reticulum Ca(2+)-ATPase/ATP2A2 and mitochondrial F1-ATPase (PubMed:18650434). Facilitates diastolic Ca(2+) dissociation and myofilament mechanics in order to improve relaxation during diastole (By similarity) (PubMed:18650434).</text>
</comment>
<comment type="subunit">
    <text evidence="2 3 7 8 9">Dimer of either two alpha chains, or two beta chains, or one alpha and one beta chain. Also forms heterodimers with S100P (By similarity). Interacts with AGER (PubMed:19910580). Interacts with CAPZA1 (PubMed:19452629). Interacts with FKBP4. Interacts with RYR1 and RYR2 (PubMed:18650434). Interacts with CACYBP in a calcium-dependent manner. Interacts with PPP5C (via TPR repeats); the interaction is calcium-dependent and modulates PPP5C activity. Interacts with ATP2A2 and PLN in a Ca(2+)-dependent manner (By similarity). Interacts with mitochondrial F1-ATPase subunits ATP5F1A and ATP5F1B; these interactions increase F1-ATPase activity (By similarity).</text>
</comment>
<comment type="interaction">
    <interactant intactId="EBI-6477109">
        <id>P35467</id>
    </interactant>
    <interactant intactId="EBI-1047444">
        <id>Q02790</id>
        <label>FKBP4</label>
    </interactant>
    <organismsDiffer>true</organismsDiffer>
    <experiments>7</experiments>
</comment>
<comment type="interaction">
    <interactant intactId="EBI-6477109">
        <id>P35467</id>
    </interactant>
    <interactant intactId="EBI-296047">
        <id>P07900</id>
        <label>HSP90AA1</label>
    </interactant>
    <organismsDiffer>true</organismsDiffer>
    <experiments>4</experiments>
</comment>
<comment type="interaction">
    <interactant intactId="EBI-6477109">
        <id>P35467</id>
    </interactant>
    <interactant intactId="EBI-629985">
        <id>P08107</id>
        <label>HSPA1B</label>
    </interactant>
    <organismsDiffer>true</organismsDiffer>
    <experiments>4</experiments>
</comment>
<comment type="interaction">
    <interactant intactId="EBI-6477109">
        <id>P35467</id>
    </interactant>
    <interactant intactId="EBI-6477155">
        <id>P26882</id>
        <label>PPID</label>
    </interactant>
    <organismsDiffer>true</organismsDiffer>
    <experiments>7</experiments>
</comment>
<comment type="subcellular location">
    <subcellularLocation>
        <location evidence="2">Cytoplasm</location>
    </subcellularLocation>
    <subcellularLocation>
        <location evidence="2">Sarcoplasmic reticulum</location>
    </subcellularLocation>
    <subcellularLocation>
        <location evidence="3">Mitochondrion</location>
    </subcellularLocation>
</comment>
<comment type="tissue specificity">
    <text evidence="6">Although predominant among the water-soluble brain proteins, S100 is also found in a variety of other tissues.</text>
</comment>
<comment type="PTM">
    <text evidence="2">Glutathionylated; glutathionylation increases affinity to calcium about 10-fold.</text>
</comment>
<comment type="miscellaneous">
    <text evidence="1">Able to bind zinc in vitro; the binding sites are different from the calcium binding sites. The physiological relevance of zinc binding is unclear. Physiological concentrations of potassium antagonize the binding of both divalent cations, especially affecting the high-affinity calcium-binding sites.</text>
</comment>
<comment type="similarity">
    <text evidence="10">Belongs to the S-100 family.</text>
</comment>
<reference key="1">
    <citation type="submission" date="1995-05" db="EMBL/GenBank/DDBJ databases">
        <authorList>
            <person name="Song W."/>
        </authorList>
    </citation>
    <scope>NUCLEOTIDE SEQUENCE [GENOMIC DNA]</scope>
    <source>
        <strain>Sprague-Dawley</strain>
    </source>
</reference>
<reference key="2">
    <citation type="journal article" date="1991" name="Brain Res. Bull.">
        <title>Isolation of a rat S100 alpha cDNA and distribution of its mRNA in rat tissues.</title>
        <authorList>
            <person name="Zimmer D.B."/>
            <person name="Song W."/>
            <person name="Zimmer W.E."/>
        </authorList>
    </citation>
    <scope>NUCLEOTIDE SEQUENCE [MRNA] OF 11-94</scope>
    <scope>TISSUE SPECIFICITY</scope>
    <source>
        <tissue>Kidney</tissue>
    </source>
</reference>
<reference key="3">
    <citation type="journal article" date="2010" name="Circ. Res.">
        <title>S100B interaction with the receptor for advanced glycation end products (RAGE): a novel receptor-mediated mechanism for myocyte apoptosis postinfarction.</title>
        <authorList>
            <person name="Tsoporis J.N."/>
            <person name="Izhar S."/>
            <person name="Leong-Poi H."/>
            <person name="Desjardins J.F."/>
            <person name="Huttunen H.J."/>
            <person name="Parker T.G."/>
        </authorList>
    </citation>
    <scope>INTERACTION WITH AGER</scope>
</reference>
<reference key="4">
    <citation type="journal article" date="2002" name="Biochemistry">
        <title>Three-dimensional solution structure of the calcium-signaling protein apo-S100A1 as determined by NMR.</title>
        <authorList>
            <person name="Rustandi R.R."/>
            <person name="Baldisseri D.M."/>
            <person name="Inman K.G."/>
            <person name="Nizner P."/>
            <person name="Hamilton S.M."/>
            <person name="Landar A."/>
            <person name="Landar A."/>
            <person name="Zimmer D.B."/>
            <person name="Weber D.J."/>
        </authorList>
    </citation>
    <scope>STRUCTURE BY NMR OF 2-94</scope>
</reference>
<reference key="5">
    <citation type="journal article" date="2005" name="J. Mol. Biol.">
        <title>The three-dimensional solution structure of Ca(2+)-bound S100A1 as determined by NMR spectroscopy.</title>
        <authorList>
            <person name="Wright N.T."/>
            <person name="Varney K.M."/>
            <person name="Ellis K.C."/>
            <person name="Markowitz J."/>
            <person name="Gitti R.K."/>
            <person name="Zimmer D.B."/>
            <person name="Weber D.J."/>
        </authorList>
    </citation>
    <scope>STRUCTURE BY NMR OF 2-94 IN COMPLEX WITH CALCIUM</scope>
    <scope>FUNCTION</scope>
</reference>
<reference key="6">
    <citation type="journal article" date="2008" name="J. Biol. Chem.">
        <title>S100A1 and calmodulin compete for the same binding site on ryanodine receptor.</title>
        <authorList>
            <person name="Wright N.T."/>
            <person name="Prosser B.L."/>
            <person name="Varney K.M."/>
            <person name="Zimmer D.B."/>
            <person name="Schneider M.F."/>
            <person name="Weber D.J."/>
        </authorList>
    </citation>
    <scope>STRUCTURE BY NMR OF 2-94 IN COMPLEX WITH CALCIUM AND RYR1</scope>
    <scope>FUNCTION</scope>
    <scope>INTERACTION WITH RYR1 AND RYR2</scope>
</reference>
<reference key="7">
    <citation type="journal article" date="2009" name="J. Mol. Biol.">
        <title>Solution structure of S100A1 bound to the CapZ peptide (TRTK12).</title>
        <authorList>
            <person name="Wright N.T."/>
            <person name="Cannon B.R."/>
            <person name="Wilder P.T."/>
            <person name="Morgan M.T."/>
            <person name="Varney K.M."/>
            <person name="Zimmer D.B."/>
            <person name="Weber D.J."/>
        </authorList>
    </citation>
    <scope>STRUCTURE BY NMR OF 2-94 IN COMPLEX WITH CALCIUM AND CAPZA1</scope>
</reference>
<accession>P35467</accession>
<protein>
    <recommendedName>
        <fullName>Protein S100-A1</fullName>
    </recommendedName>
    <alternativeName>
        <fullName>S-100 protein alpha chain</fullName>
    </alternativeName>
    <alternativeName>
        <fullName>S-100 protein subunit alpha</fullName>
    </alternativeName>
    <alternativeName>
        <fullName>S100 calcium-binding protein A1</fullName>
    </alternativeName>
</protein>
<organism>
    <name type="scientific">Rattus norvegicus</name>
    <name type="common">Rat</name>
    <dbReference type="NCBI Taxonomy" id="10116"/>
    <lineage>
        <taxon>Eukaryota</taxon>
        <taxon>Metazoa</taxon>
        <taxon>Chordata</taxon>
        <taxon>Craniata</taxon>
        <taxon>Vertebrata</taxon>
        <taxon>Euteleostomi</taxon>
        <taxon>Mammalia</taxon>
        <taxon>Eutheria</taxon>
        <taxon>Euarchontoglires</taxon>
        <taxon>Glires</taxon>
        <taxon>Rodentia</taxon>
        <taxon>Myomorpha</taxon>
        <taxon>Muroidea</taxon>
        <taxon>Muridae</taxon>
        <taxon>Murinae</taxon>
        <taxon>Rattus</taxon>
    </lineage>
</organism>